<gene>
    <name evidence="1" type="primary">ttcA</name>
    <name type="ordered locus">ACIAD2829</name>
</gene>
<keyword id="KW-0004">4Fe-4S</keyword>
<keyword id="KW-0067">ATP-binding</keyword>
<keyword id="KW-0963">Cytoplasm</keyword>
<keyword id="KW-0408">Iron</keyword>
<keyword id="KW-0411">Iron-sulfur</keyword>
<keyword id="KW-0460">Magnesium</keyword>
<keyword id="KW-0479">Metal-binding</keyword>
<keyword id="KW-0547">Nucleotide-binding</keyword>
<keyword id="KW-0694">RNA-binding</keyword>
<keyword id="KW-0808">Transferase</keyword>
<keyword id="KW-0819">tRNA processing</keyword>
<keyword id="KW-0820">tRNA-binding</keyword>
<protein>
    <recommendedName>
        <fullName evidence="1">tRNA-cytidine(32) 2-sulfurtransferase</fullName>
        <ecNumber evidence="1">2.8.1.-</ecNumber>
    </recommendedName>
    <alternativeName>
        <fullName evidence="1">Two-thiocytidine biosynthesis protein A</fullName>
    </alternativeName>
    <alternativeName>
        <fullName evidence="1">tRNA 2-thiocytidine biosynthesis protein TtcA</fullName>
    </alternativeName>
</protein>
<comment type="function">
    <text evidence="1">Catalyzes the ATP-dependent 2-thiolation of cytidine in position 32 of tRNA, to form 2-thiocytidine (s(2)C32). The sulfur atoms are provided by the cysteine/cysteine desulfurase (IscS) system.</text>
</comment>
<comment type="catalytic activity">
    <reaction evidence="1">
        <text>cytidine(32) in tRNA + S-sulfanyl-L-cysteinyl-[cysteine desulfurase] + AH2 + ATP = 2-thiocytidine(32) in tRNA + L-cysteinyl-[cysteine desulfurase] + A + AMP + diphosphate + H(+)</text>
        <dbReference type="Rhea" id="RHEA:57048"/>
        <dbReference type="Rhea" id="RHEA-COMP:10288"/>
        <dbReference type="Rhea" id="RHEA-COMP:12157"/>
        <dbReference type="Rhea" id="RHEA-COMP:12158"/>
        <dbReference type="Rhea" id="RHEA-COMP:14821"/>
        <dbReference type="ChEBI" id="CHEBI:13193"/>
        <dbReference type="ChEBI" id="CHEBI:15378"/>
        <dbReference type="ChEBI" id="CHEBI:17499"/>
        <dbReference type="ChEBI" id="CHEBI:29950"/>
        <dbReference type="ChEBI" id="CHEBI:30616"/>
        <dbReference type="ChEBI" id="CHEBI:33019"/>
        <dbReference type="ChEBI" id="CHEBI:61963"/>
        <dbReference type="ChEBI" id="CHEBI:82748"/>
        <dbReference type="ChEBI" id="CHEBI:141453"/>
        <dbReference type="ChEBI" id="CHEBI:456215"/>
    </reaction>
    <physiologicalReaction direction="left-to-right" evidence="1">
        <dbReference type="Rhea" id="RHEA:57049"/>
    </physiologicalReaction>
</comment>
<comment type="cofactor">
    <cofactor evidence="1">
        <name>Mg(2+)</name>
        <dbReference type="ChEBI" id="CHEBI:18420"/>
    </cofactor>
</comment>
<comment type="cofactor">
    <cofactor evidence="1">
        <name>[4Fe-4S] cluster</name>
        <dbReference type="ChEBI" id="CHEBI:49883"/>
    </cofactor>
    <text evidence="1">Binds 1 [4Fe-4S] cluster per subunit. The cluster is chelated by three Cys residues, the fourth Fe has a free coordination site that may bind a sulfur atom transferred from the persulfide of IscS.</text>
</comment>
<comment type="pathway">
    <text evidence="1">tRNA modification.</text>
</comment>
<comment type="subunit">
    <text evidence="1">Homodimer.</text>
</comment>
<comment type="subcellular location">
    <subcellularLocation>
        <location evidence="1">Cytoplasm</location>
    </subcellularLocation>
</comment>
<comment type="miscellaneous">
    <text evidence="1">The thiolation reaction likely consists of two steps: a first activation step by ATP to form an adenylated intermediate of the target base of tRNA, and a second nucleophilic substitution step of the sulfur (S) atom supplied by the hydrosulfide attached to the Fe-S cluster.</text>
</comment>
<comment type="similarity">
    <text evidence="1">Belongs to the TtcA family.</text>
</comment>
<feature type="chain" id="PRO_0000348650" description="tRNA-cytidine(32) 2-sulfurtransferase">
    <location>
        <begin position="1"/>
        <end position="301"/>
    </location>
</feature>
<feature type="short sequence motif" description="PP-loop motif" evidence="1">
    <location>
        <begin position="55"/>
        <end position="60"/>
    </location>
</feature>
<feature type="binding site" evidence="1">
    <location>
        <position position="130"/>
    </location>
    <ligand>
        <name>[4Fe-4S] cluster</name>
        <dbReference type="ChEBI" id="CHEBI:49883"/>
    </ligand>
</feature>
<feature type="binding site" evidence="1">
    <location>
        <position position="133"/>
    </location>
    <ligand>
        <name>[4Fe-4S] cluster</name>
        <dbReference type="ChEBI" id="CHEBI:49883"/>
    </ligand>
</feature>
<feature type="binding site" evidence="1">
    <location>
        <position position="221"/>
    </location>
    <ligand>
        <name>[4Fe-4S] cluster</name>
        <dbReference type="ChEBI" id="CHEBI:49883"/>
    </ligand>
</feature>
<name>TTCA_ACIAD</name>
<evidence type="ECO:0000255" key="1">
    <source>
        <dbReference type="HAMAP-Rule" id="MF_01850"/>
    </source>
</evidence>
<organism>
    <name type="scientific">Acinetobacter baylyi (strain ATCC 33305 / BD413 / ADP1)</name>
    <dbReference type="NCBI Taxonomy" id="62977"/>
    <lineage>
        <taxon>Bacteria</taxon>
        <taxon>Pseudomonadati</taxon>
        <taxon>Pseudomonadota</taxon>
        <taxon>Gammaproteobacteria</taxon>
        <taxon>Moraxellales</taxon>
        <taxon>Moraxellaceae</taxon>
        <taxon>Acinetobacter</taxon>
    </lineage>
</organism>
<sequence length="301" mass="34713">MYSPVESEQGFNFKPELPTSSAYYRLLKKLRRQVGHAIRDFKMIEDGDKVMVCVSGGKDSYTLLDILLQFKRIAPINFDIVAVNLDQKQPGFPEDVLPRYMEENNIPYYILEKDTYTITKRLTPEGKTYCAVCSRLRRGSLYGFAQEIGATKVALGHHRDDIIATFFLNLFHGGSLKAMPPKLLSSDKKNILIRPLAYVEEKDIIKYADLRKFPIIPCNLCGSQENLQRAMLNEMLREWDKQYPKRLHSIFGALQNVSPSQLADRDLFDFEILDSQRELDFKDPEEMKKRLDIVNLSFAAD</sequence>
<accession>Q6F8Q3</accession>
<reference key="1">
    <citation type="journal article" date="2004" name="Nucleic Acids Res.">
        <title>Unique features revealed by the genome sequence of Acinetobacter sp. ADP1, a versatile and naturally transformation competent bacterium.</title>
        <authorList>
            <person name="Barbe V."/>
            <person name="Vallenet D."/>
            <person name="Fonknechten N."/>
            <person name="Kreimeyer A."/>
            <person name="Oztas S."/>
            <person name="Labarre L."/>
            <person name="Cruveiller S."/>
            <person name="Robert C."/>
            <person name="Duprat S."/>
            <person name="Wincker P."/>
            <person name="Ornston L.N."/>
            <person name="Weissenbach J."/>
            <person name="Marliere P."/>
            <person name="Cohen G.N."/>
            <person name="Medigue C."/>
        </authorList>
    </citation>
    <scope>NUCLEOTIDE SEQUENCE [LARGE SCALE GENOMIC DNA]</scope>
    <source>
        <strain>ATCC 33305 / BD413 / ADP1</strain>
    </source>
</reference>
<proteinExistence type="inferred from homology"/>
<dbReference type="EC" id="2.8.1.-" evidence="1"/>
<dbReference type="EMBL" id="CR543861">
    <property type="protein sequence ID" value="CAG69562.1"/>
    <property type="molecule type" value="Genomic_DNA"/>
</dbReference>
<dbReference type="RefSeq" id="WP_004929282.1">
    <property type="nucleotide sequence ID" value="NC_005966.1"/>
</dbReference>
<dbReference type="SMR" id="Q6F8Q3"/>
<dbReference type="STRING" id="202950.GCA_001485005_03014"/>
<dbReference type="GeneID" id="45235067"/>
<dbReference type="KEGG" id="aci:ACIAD2829"/>
<dbReference type="eggNOG" id="COG0037">
    <property type="taxonomic scope" value="Bacteria"/>
</dbReference>
<dbReference type="HOGENOM" id="CLU_026481_0_0_6"/>
<dbReference type="OrthoDB" id="9801054at2"/>
<dbReference type="BioCyc" id="ASP62977:ACIAD_RS12760-MONOMER"/>
<dbReference type="Proteomes" id="UP000000430">
    <property type="component" value="Chromosome"/>
</dbReference>
<dbReference type="GO" id="GO:0005737">
    <property type="term" value="C:cytoplasm"/>
    <property type="evidence" value="ECO:0007669"/>
    <property type="project" value="UniProtKB-SubCell"/>
</dbReference>
<dbReference type="GO" id="GO:0051539">
    <property type="term" value="F:4 iron, 4 sulfur cluster binding"/>
    <property type="evidence" value="ECO:0007669"/>
    <property type="project" value="UniProtKB-UniRule"/>
</dbReference>
<dbReference type="GO" id="GO:0005524">
    <property type="term" value="F:ATP binding"/>
    <property type="evidence" value="ECO:0007669"/>
    <property type="project" value="UniProtKB-UniRule"/>
</dbReference>
<dbReference type="GO" id="GO:0000287">
    <property type="term" value="F:magnesium ion binding"/>
    <property type="evidence" value="ECO:0007669"/>
    <property type="project" value="UniProtKB-UniRule"/>
</dbReference>
<dbReference type="GO" id="GO:0016783">
    <property type="term" value="F:sulfurtransferase activity"/>
    <property type="evidence" value="ECO:0007669"/>
    <property type="project" value="UniProtKB-UniRule"/>
</dbReference>
<dbReference type="GO" id="GO:0000049">
    <property type="term" value="F:tRNA binding"/>
    <property type="evidence" value="ECO:0007669"/>
    <property type="project" value="UniProtKB-KW"/>
</dbReference>
<dbReference type="GO" id="GO:0034227">
    <property type="term" value="P:tRNA thio-modification"/>
    <property type="evidence" value="ECO:0007669"/>
    <property type="project" value="UniProtKB-UniRule"/>
</dbReference>
<dbReference type="CDD" id="cd24138">
    <property type="entry name" value="TtcA-like"/>
    <property type="match status" value="1"/>
</dbReference>
<dbReference type="Gene3D" id="3.40.50.620">
    <property type="entry name" value="HUPs"/>
    <property type="match status" value="1"/>
</dbReference>
<dbReference type="HAMAP" id="MF_01850">
    <property type="entry name" value="TtcA"/>
    <property type="match status" value="1"/>
</dbReference>
<dbReference type="InterPro" id="IPR014729">
    <property type="entry name" value="Rossmann-like_a/b/a_fold"/>
</dbReference>
<dbReference type="InterPro" id="IPR011063">
    <property type="entry name" value="TilS/TtcA_N"/>
</dbReference>
<dbReference type="InterPro" id="IPR012089">
    <property type="entry name" value="tRNA_Cyd_32_2_STrfase"/>
</dbReference>
<dbReference type="InterPro" id="IPR035107">
    <property type="entry name" value="tRNA_thiolation_TtcA_Ctu1"/>
</dbReference>
<dbReference type="NCBIfam" id="NF007972">
    <property type="entry name" value="PRK10696.1"/>
    <property type="match status" value="1"/>
</dbReference>
<dbReference type="PANTHER" id="PTHR43686:SF1">
    <property type="entry name" value="AMINOTRAN_5 DOMAIN-CONTAINING PROTEIN"/>
    <property type="match status" value="1"/>
</dbReference>
<dbReference type="PANTHER" id="PTHR43686">
    <property type="entry name" value="SULFURTRANSFERASE-RELATED"/>
    <property type="match status" value="1"/>
</dbReference>
<dbReference type="Pfam" id="PF01171">
    <property type="entry name" value="ATP_bind_3"/>
    <property type="match status" value="1"/>
</dbReference>
<dbReference type="PIRSF" id="PIRSF004976">
    <property type="entry name" value="ATPase_YdaO"/>
    <property type="match status" value="1"/>
</dbReference>
<dbReference type="SUPFAM" id="SSF52402">
    <property type="entry name" value="Adenine nucleotide alpha hydrolases-like"/>
    <property type="match status" value="1"/>
</dbReference>